<protein>
    <recommendedName>
        <fullName>RNA2 polyprotein</fullName>
    </recommendedName>
    <alternativeName>
        <fullName>Genome polyprotein M</fullName>
    </alternativeName>
    <alternativeName>
        <fullName>M RNA polyprotein</fullName>
    </alternativeName>
    <alternativeName>
        <fullName>Middle component RNA polyprotein</fullName>
    </alternativeName>
    <alternativeName>
        <fullName>P2</fullName>
    </alternativeName>
    <component>
        <recommendedName>
            <fullName>VP58</fullName>
        </recommendedName>
    </component>
    <component>
        <recommendedName>
            <fullName>Movement protein</fullName>
            <shortName>MP</shortName>
        </recommendedName>
    </component>
    <component>
        <recommendedName>
            <fullName>Large capsid protein</fullName>
            <shortName>LCP</shortName>
        </recommendedName>
        <alternativeName>
            <fullName>Coat protein VP42</fullName>
        </alternativeName>
        <alternativeName>
            <fullName>L subunit</fullName>
        </alternativeName>
        <alternativeName>
            <fullName>Large coat protein</fullName>
        </alternativeName>
    </component>
    <component>
        <recommendedName>
            <fullName>Small capsid protein</fullName>
            <shortName>SCP</shortName>
        </recommendedName>
        <alternativeName>
            <fullName>Coat protein VP22</fullName>
        </alternativeName>
        <alternativeName>
            <fullName>S subunit</fullName>
        </alternativeName>
    </component>
</protein>
<organism>
    <name type="scientific">Andean potato mottle virus</name>
    <name type="common">APMV</name>
    <dbReference type="NCBI Taxonomy" id="12259"/>
    <lineage>
        <taxon>Viruses</taxon>
        <taxon>Riboviria</taxon>
        <taxon>Orthornavirae</taxon>
        <taxon>Pisuviricota</taxon>
        <taxon>Pisoniviricetes</taxon>
        <taxon>Picornavirales</taxon>
        <taxon>Secoviridae</taxon>
        <taxon>Comovirinae</taxon>
        <taxon>Comovirus</taxon>
        <taxon>Comovirus andesense</taxon>
    </lineage>
</organism>
<reference key="1">
    <citation type="journal article" date="1993" name="Intervirology">
        <title>Nucleotide sequence analysis of an Andean potato mottle virus middle component RNA cDNA clone: comparisons of the encoded proteins with those of other comoviruses.</title>
        <authorList>
            <person name="Shindo N."/>
            <person name="Vicente A.C.P."/>
            <person name="Krengiel R."/>
            <person name="de Oliveira D.E."/>
        </authorList>
    </citation>
    <scope>NUCLEOTIDE SEQUENCE [GENOMIC RNA]</scope>
    <scope>PROTEIN SEQUENCE OF 414-425 AND 801-810</scope>
    <source>
        <strain>C</strain>
    </source>
</reference>
<accession>P38485</accession>
<sequence length="997" mass="110329">MSELIVSDVVALSVWGLLTVVKVYQGNFSLSVLFSEAQTLGFLFFISCHWLQSILLPWVVKIKCATRFDIDLVEMEMRAEKYLNSIPANVLEDRAKAYNVSKMTSIKNQIPSGKALYQNGKSLASMIKSQFQPISKVLKGGEVKSYNYIPVGSFTAGEHCELAVPIMPEEELAAIVPDSDFALVTKEDNKAKSVHVGAVEIVMECMTSPDCDIYGGAMFVDTFHEDPKNAVRALFVTQLKGGVSPRCLFFPDTQVEIKKGMNERFRLILSSGNSDFKPGENLAYLKANVAMCGISMNKGYVPTAFHESYARKERASVIEYLGRYSAVIHHRNEFKPEMLKRDGLSFRFGGKTKLIEKGPLQYEWSETASKVVSVKGTGPPTKEDETISKEVSETLGATEHVVFPTRNVVAQAQMEVAQFGRLLDDTKSLKLQSLLNSRIAAGRFSIPMTAVKGTVVFDGLLASLIGTTLRGAPMFRHTYRQSTKLRFIFTINVPISTGIGLMVGYNSVTSDKHLTNEYTISSEESVVWNPACQGVLEFSVSPNPCGMYWSYDYFRQTGSRLSICVISPWSATPTTDCAVAWQIHVDDEQMTMSIFNPTQAPAVLPVKRWMGNLIFKQGAQEQVKKMPLAIGAAVGDDKTAVMTMPNSLAAMWNYQIGTFNFEFTKLSSPFIKGTLLAFIAMDQDVSYSLEELQNFPNKIVQFDEKDGRAYVSFGEEHFAQAWSTQVSGAVTSAKRGCPYLYVVSKDCIASTICGDFQVGVKLLSIENYSPCGYNPGLVVASTIVQNTAGSNSTSLLAWPQFCSPCINVWSEFCALDIPVVDTTKVNFAQYSLDLVNPTVSANASGRNWRFVLIPSPMVYLLQTSDWKRGKLHFKLKILGKSNVKRSEWSSTSRIDVRRAPGTEYLNAITVFTAEPHADEINFEIEICGPNNGFEMWNADFGNQLSWMANVVIGNPDQAGIHQWYVRPGENFEVAGNRMVQPLALSGEDGTGMLPILK</sequence>
<evidence type="ECO:0000250" key="1">
    <source>
        <dbReference type="UniProtKB" id="P03599"/>
    </source>
</evidence>
<evidence type="ECO:0000250" key="2">
    <source>
        <dbReference type="UniProtKB" id="P23009"/>
    </source>
</evidence>
<evidence type="ECO:0000305" key="3"/>
<name>POL2_APMV</name>
<organismHost>
    <name type="scientific">Solanum tuberosum</name>
    <name type="common">Potato</name>
    <dbReference type="NCBI Taxonomy" id="4113"/>
</organismHost>
<keyword id="KW-0024">Alternative initiation</keyword>
<keyword id="KW-0167">Capsid protein</keyword>
<keyword id="KW-0903">Direct protein sequencing</keyword>
<keyword id="KW-0238">DNA-binding</keyword>
<keyword id="KW-0342">GTP-binding</keyword>
<keyword id="KW-1031">Host cell junction</keyword>
<keyword id="KW-0945">Host-virus interaction</keyword>
<keyword id="KW-1090">Inhibition of host innate immune response by virus</keyword>
<keyword id="KW-0547">Nucleotide-binding</keyword>
<keyword id="KW-0694">RNA-binding</keyword>
<keyword id="KW-0941">Suppressor of RNA silencing</keyword>
<keyword id="KW-1142">T=3 icosahedral capsid protein</keyword>
<keyword id="KW-0813">Transport</keyword>
<keyword id="KW-0899">Viral immunoevasion</keyword>
<keyword id="KW-0916">Viral movement protein</keyword>
<keyword id="KW-0946">Virion</keyword>
<proteinExistence type="evidence at protein level"/>
<dbReference type="EMBL" id="L16239">
    <property type="protein sequence ID" value="AAA42421.1"/>
    <property type="molecule type" value="Genomic_RNA"/>
</dbReference>
<dbReference type="RefSeq" id="YP_009507888.1">
    <molecule id="P38485-1"/>
    <property type="nucleotide sequence ID" value="NC_038744.1"/>
</dbReference>
<dbReference type="SMR" id="P38485"/>
<dbReference type="GeneID" id="37619054"/>
<dbReference type="GO" id="GO:0044219">
    <property type="term" value="C:host cell plasmodesma"/>
    <property type="evidence" value="ECO:0007669"/>
    <property type="project" value="UniProtKB-SubCell"/>
</dbReference>
<dbReference type="GO" id="GO:0039617">
    <property type="term" value="C:T=3 icosahedral viral capsid"/>
    <property type="evidence" value="ECO:0007669"/>
    <property type="project" value="UniProtKB-KW"/>
</dbReference>
<dbReference type="GO" id="GO:0003677">
    <property type="term" value="F:DNA binding"/>
    <property type="evidence" value="ECO:0007669"/>
    <property type="project" value="UniProtKB-KW"/>
</dbReference>
<dbReference type="GO" id="GO:0005525">
    <property type="term" value="F:GTP binding"/>
    <property type="evidence" value="ECO:0007669"/>
    <property type="project" value="UniProtKB-KW"/>
</dbReference>
<dbReference type="GO" id="GO:0003723">
    <property type="term" value="F:RNA binding"/>
    <property type="evidence" value="ECO:0007669"/>
    <property type="project" value="UniProtKB-KW"/>
</dbReference>
<dbReference type="GO" id="GO:0005198">
    <property type="term" value="F:structural molecule activity"/>
    <property type="evidence" value="ECO:0007669"/>
    <property type="project" value="InterPro"/>
</dbReference>
<dbReference type="GO" id="GO:0052170">
    <property type="term" value="P:symbiont-mediated suppression of host innate immune response"/>
    <property type="evidence" value="ECO:0007669"/>
    <property type="project" value="UniProtKB-KW"/>
</dbReference>
<dbReference type="GO" id="GO:0046740">
    <property type="term" value="P:transport of virus in host, cell to cell"/>
    <property type="evidence" value="ECO:0007669"/>
    <property type="project" value="UniProtKB-KW"/>
</dbReference>
<dbReference type="Gene3D" id="2.60.120.20">
    <property type="match status" value="2"/>
</dbReference>
<dbReference type="InterPro" id="IPR003181">
    <property type="entry name" value="Como_LCP"/>
</dbReference>
<dbReference type="InterPro" id="IPR003182">
    <property type="entry name" value="RNA2_polyprotein"/>
</dbReference>
<dbReference type="InterPro" id="IPR029053">
    <property type="entry name" value="Viral_coat"/>
</dbReference>
<dbReference type="Pfam" id="PF02247">
    <property type="entry name" value="Como_LCP"/>
    <property type="match status" value="1"/>
</dbReference>
<dbReference type="Pfam" id="PF02248">
    <property type="entry name" value="Como_SCP"/>
    <property type="match status" value="1"/>
</dbReference>
<dbReference type="SUPFAM" id="SSF88633">
    <property type="entry name" value="Positive stranded ssRNA viruses"/>
    <property type="match status" value="3"/>
</dbReference>
<feature type="chain" id="PRO_0000445837" description="RNA2 polyprotein">
    <location>
        <begin position="1"/>
        <end position="997"/>
    </location>
</feature>
<feature type="chain" id="PRO_0000445838" description="VP58">
    <location>
        <begin position="1"/>
        <end position="413"/>
    </location>
</feature>
<feature type="chain" id="PRO_0000037021" description="Movement protein">
    <location>
        <begin position="75"/>
        <end position="413"/>
    </location>
</feature>
<feature type="chain" id="PRO_0000037022" description="Large capsid protein">
    <location>
        <begin position="414"/>
        <end position="800"/>
    </location>
</feature>
<feature type="chain" id="PRO_0000037023" description="Small capsid protein">
    <location>
        <begin position="801"/>
        <end position="997"/>
    </location>
</feature>
<feature type="region of interest" description="Involved in tubule formation by the movement protein" evidence="1">
    <location>
        <begin position="370"/>
        <end position="376"/>
    </location>
</feature>
<feature type="site" description="Cleavage; by viral protease" evidence="1">
    <location>
        <begin position="413"/>
        <end position="414"/>
    </location>
</feature>
<feature type="site" description="Interaction with the viral RNA" evidence="1">
    <location>
        <position position="430"/>
    </location>
</feature>
<feature type="site" description="Cleavage; by viral protease" evidence="1">
    <location>
        <begin position="800"/>
        <end position="801"/>
    </location>
</feature>
<feature type="splice variant" id="VSP_059977" description="In isoform 2.">
    <location>
        <begin position="1"/>
        <end position="74"/>
    </location>
</feature>
<comment type="function">
    <molecule>VP58</molecule>
    <text evidence="2">Responsible for viral RNA2 accumulation. May function by recruiting the RNA1-encoded polyprotein that contains the replication protein to RNA2 and enable its replication.</text>
</comment>
<comment type="function">
    <molecule>Movement protein</molecule>
    <text evidence="1">Transports the viral genome to neighboring plant cells directly through plasmosdesmata, without any budding. The movement protein allows efficient cell to cell propagation, by bypassing the host cell wall barrier. Acts by forming a tubular structure at the host plasmodesmata, enlarging it enough to allow free passage of virion capsids. Binds to GTP and to single-stranded RNA and single-stranded DNA in a non-sequence-specific manner.</text>
</comment>
<comment type="function">
    <molecule>Large capsid protein</molecule>
    <text evidence="1">Together with the small capsid protein, forms an icosahedral capsid (T=3) enclosing the viral positive strand RNA genome, with a diameter of approximately 300 Angstroms. The capsid is formed from 60 copies each of the large and the small capsid protein. The large capsid protein interacts with the viral RNA.</text>
</comment>
<comment type="function">
    <molecule>Small capsid protein</molecule>
    <text evidence="1">Together with the large capsid protein, forms an icosahedral capsid (T=3) enclosing the viral positive strand RNA genome, with a diameter of approximately 300 Angstroms. The capsid is formed from 60 copies each of the large and the small capsid protein. The small capsid protein forms the turrets at the fivefold axes of the viral particle. Also seems to act as suppressor of post-transcriptional gene silencing (PTGS), a mechanism of plant viral defense that limits the accumulation of viral RNAs.</text>
</comment>
<comment type="subunit">
    <molecule>Small capsid protein</molecule>
    <text evidence="1">Interacts with the large capsid protein.</text>
</comment>
<comment type="subunit">
    <molecule>Large capsid protein</molecule>
    <text evidence="1">Interacts with the small capsid protein. Homomultimer; assembles as pentons. Interacts with the movement protein (via C-terminus).</text>
</comment>
<comment type="subunit">
    <molecule>Movement protein</molecule>
    <text evidence="1">Interacts (via C-terminus) with the large capsid protein.</text>
</comment>
<comment type="subcellular location">
    <molecule>Movement protein</molecule>
    <subcellularLocation>
        <location evidence="1">Host cell junction</location>
        <location evidence="1">Host plasmodesma</location>
    </subcellularLocation>
    <text evidence="1">Assembles in tubules that are embedded within modified plasmodesmata.</text>
</comment>
<comment type="subcellular location">
    <molecule>Large capsid protein</molecule>
    <subcellularLocation>
        <location evidence="1">Virion</location>
    </subcellularLocation>
</comment>
<comment type="subcellular location">
    <molecule>Small capsid protein</molecule>
    <subcellularLocation>
        <location evidence="1">Virion</location>
    </subcellularLocation>
</comment>
<comment type="alternative products">
    <event type="alternative initiation"/>
    <isoform>
        <id>P38485-1</id>
        <name>1</name>
        <name>RNA2 polyprotein</name>
        <sequence type="displayed"/>
    </isoform>
    <isoform>
        <id>P38485-2</id>
        <name>2</name>
        <sequence type="described" ref="VSP_059977"/>
    </isoform>
</comment>
<comment type="domain">
    <molecule>Large capsid protein</molecule>
    <text evidence="1">Contains a beta-sheet structure called beta-barrel jelly roll.</text>
</comment>
<comment type="domain">
    <molecule>Small capsid protein</molecule>
    <text evidence="1">Contains a beta-sheet structure called beta-barrel jelly roll.</text>
</comment>
<comment type="domain">
    <molecule>Movement protein</molecule>
    <text evidence="1">The C-terminus is involved in binding to the large capsid protein, and hence to the virion.</text>
</comment>
<comment type="PTM">
    <molecule>RNA2 polyprotein</molecule>
    <text evidence="1">Specific enzymatic cleavages by picornain 3C-like protease in vivo yield mature proteins.</text>
</comment>
<comment type="caution">
    <text evidence="3">It is uncertain whether Met-1 or Met-75 is the initiator.</text>
</comment>